<organism>
    <name type="scientific">Nitrobacter winogradskyi (strain ATCC 25391 / DSM 10237 / CIP 104748 / NCIMB 11846 / Nb-255)</name>
    <dbReference type="NCBI Taxonomy" id="323098"/>
    <lineage>
        <taxon>Bacteria</taxon>
        <taxon>Pseudomonadati</taxon>
        <taxon>Pseudomonadota</taxon>
        <taxon>Alphaproteobacteria</taxon>
        <taxon>Hyphomicrobiales</taxon>
        <taxon>Nitrobacteraceae</taxon>
        <taxon>Nitrobacter</taxon>
    </lineage>
</organism>
<protein>
    <recommendedName>
        <fullName evidence="1">Ribosomal RNA small subunit methyltransferase G</fullName>
        <ecNumber evidence="1">2.1.1.170</ecNumber>
    </recommendedName>
    <alternativeName>
        <fullName evidence="1">16S rRNA 7-methylguanosine methyltransferase</fullName>
        <shortName evidence="1">16S rRNA m7G methyltransferase</shortName>
    </alternativeName>
</protein>
<comment type="function">
    <text evidence="1">Specifically methylates the N7 position of guanine in position 527 of 16S rRNA.</text>
</comment>
<comment type="catalytic activity">
    <reaction evidence="1">
        <text>guanosine(527) in 16S rRNA + S-adenosyl-L-methionine = N(7)-methylguanosine(527) in 16S rRNA + S-adenosyl-L-homocysteine</text>
        <dbReference type="Rhea" id="RHEA:42732"/>
        <dbReference type="Rhea" id="RHEA-COMP:10209"/>
        <dbReference type="Rhea" id="RHEA-COMP:10210"/>
        <dbReference type="ChEBI" id="CHEBI:57856"/>
        <dbReference type="ChEBI" id="CHEBI:59789"/>
        <dbReference type="ChEBI" id="CHEBI:74269"/>
        <dbReference type="ChEBI" id="CHEBI:74480"/>
        <dbReference type="EC" id="2.1.1.170"/>
    </reaction>
</comment>
<comment type="subcellular location">
    <subcellularLocation>
        <location evidence="1">Cytoplasm</location>
    </subcellularLocation>
</comment>
<comment type="similarity">
    <text evidence="1">Belongs to the methyltransferase superfamily. RNA methyltransferase RsmG family.</text>
</comment>
<keyword id="KW-0963">Cytoplasm</keyword>
<keyword id="KW-0489">Methyltransferase</keyword>
<keyword id="KW-1185">Reference proteome</keyword>
<keyword id="KW-0698">rRNA processing</keyword>
<keyword id="KW-0949">S-adenosyl-L-methionine</keyword>
<keyword id="KW-0808">Transferase</keyword>
<feature type="chain" id="PRO_0000335384" description="Ribosomal RNA small subunit methyltransferase G">
    <location>
        <begin position="1"/>
        <end position="277"/>
    </location>
</feature>
<feature type="binding site" evidence="1">
    <location>
        <position position="128"/>
    </location>
    <ligand>
        <name>S-adenosyl-L-methionine</name>
        <dbReference type="ChEBI" id="CHEBI:59789"/>
    </ligand>
</feature>
<feature type="binding site" evidence="1">
    <location>
        <position position="133"/>
    </location>
    <ligand>
        <name>S-adenosyl-L-methionine</name>
        <dbReference type="ChEBI" id="CHEBI:59789"/>
    </ligand>
</feature>
<feature type="binding site" evidence="1">
    <location>
        <begin position="188"/>
        <end position="189"/>
    </location>
    <ligand>
        <name>S-adenosyl-L-methionine</name>
        <dbReference type="ChEBI" id="CHEBI:59789"/>
    </ligand>
</feature>
<feature type="binding site" evidence="1">
    <location>
        <position position="198"/>
    </location>
    <ligand>
        <name>S-adenosyl-L-methionine</name>
        <dbReference type="ChEBI" id="CHEBI:59789"/>
    </ligand>
</feature>
<gene>
    <name evidence="1" type="primary">rsmG</name>
    <name type="ordered locus">Nwi_0096</name>
</gene>
<accession>Q3SWH7</accession>
<proteinExistence type="inferred from homology"/>
<sequence>MFHVKHPQREVAATRQRAVGQWPTDPYPRRLNVWPGIRDASMLDGMSAPLQKYSPCSATDKAAALALTPVSSETEARLDAYVDLLVQWQTKTNLVASSTLPQLWTRHIADSLQLLALAPQAKCWADLGSGGGFPGVVLACALADIEGARVDLVERNAKKAAFLREAVRITASPASVHLMDIGDYVDRSEDRIDCVTARALAPLQVLLGFVEPLVNKGAKALFLKGQDVEAELTEATRYWNIEPRIHSSCTGGQGRIAEFDHIERRDRRGARQAWRGS</sequence>
<name>RSMG_NITWN</name>
<reference key="1">
    <citation type="journal article" date="2006" name="Appl. Environ. Microbiol.">
        <title>Genome sequence of the chemolithoautotrophic nitrite-oxidizing bacterium Nitrobacter winogradskyi Nb-255.</title>
        <authorList>
            <person name="Starkenburg S.R."/>
            <person name="Chain P.S.G."/>
            <person name="Sayavedra-Soto L.A."/>
            <person name="Hauser L."/>
            <person name="Land M.L."/>
            <person name="Larimer F.W."/>
            <person name="Malfatti S.A."/>
            <person name="Klotz M.G."/>
            <person name="Bottomley P.J."/>
            <person name="Arp D.J."/>
            <person name="Hickey W.J."/>
        </authorList>
    </citation>
    <scope>NUCLEOTIDE SEQUENCE [LARGE SCALE GENOMIC DNA]</scope>
    <source>
        <strain>ATCC 25391 / DSM 10237 / CIP 104748 / NCIMB 11846 / Nb-255</strain>
    </source>
</reference>
<dbReference type="EC" id="2.1.1.170" evidence="1"/>
<dbReference type="EMBL" id="CP000115">
    <property type="protein sequence ID" value="ABA03364.1"/>
    <property type="molecule type" value="Genomic_DNA"/>
</dbReference>
<dbReference type="SMR" id="Q3SWH7"/>
<dbReference type="STRING" id="323098.Nwi_0096"/>
<dbReference type="KEGG" id="nwi:Nwi_0096"/>
<dbReference type="eggNOG" id="COG0357">
    <property type="taxonomic scope" value="Bacteria"/>
</dbReference>
<dbReference type="HOGENOM" id="CLU_065341_1_0_5"/>
<dbReference type="Proteomes" id="UP000002531">
    <property type="component" value="Chromosome"/>
</dbReference>
<dbReference type="GO" id="GO:0005829">
    <property type="term" value="C:cytosol"/>
    <property type="evidence" value="ECO:0007669"/>
    <property type="project" value="TreeGrafter"/>
</dbReference>
<dbReference type="GO" id="GO:0070043">
    <property type="term" value="F:rRNA (guanine-N7-)-methyltransferase activity"/>
    <property type="evidence" value="ECO:0007669"/>
    <property type="project" value="UniProtKB-UniRule"/>
</dbReference>
<dbReference type="CDD" id="cd02440">
    <property type="entry name" value="AdoMet_MTases"/>
    <property type="match status" value="1"/>
</dbReference>
<dbReference type="Gene3D" id="3.40.50.150">
    <property type="entry name" value="Vaccinia Virus protein VP39"/>
    <property type="match status" value="1"/>
</dbReference>
<dbReference type="HAMAP" id="MF_00074">
    <property type="entry name" value="16SrRNA_methyltr_G"/>
    <property type="match status" value="1"/>
</dbReference>
<dbReference type="InterPro" id="IPR003682">
    <property type="entry name" value="rRNA_ssu_MeTfrase_G"/>
</dbReference>
<dbReference type="InterPro" id="IPR029063">
    <property type="entry name" value="SAM-dependent_MTases_sf"/>
</dbReference>
<dbReference type="NCBIfam" id="TIGR00138">
    <property type="entry name" value="rsmG_gidB"/>
    <property type="match status" value="1"/>
</dbReference>
<dbReference type="PANTHER" id="PTHR31760">
    <property type="entry name" value="S-ADENOSYL-L-METHIONINE-DEPENDENT METHYLTRANSFERASES SUPERFAMILY PROTEIN"/>
    <property type="match status" value="1"/>
</dbReference>
<dbReference type="PANTHER" id="PTHR31760:SF0">
    <property type="entry name" value="S-ADENOSYL-L-METHIONINE-DEPENDENT METHYLTRANSFERASES SUPERFAMILY PROTEIN"/>
    <property type="match status" value="1"/>
</dbReference>
<dbReference type="Pfam" id="PF02527">
    <property type="entry name" value="GidB"/>
    <property type="match status" value="1"/>
</dbReference>
<dbReference type="SUPFAM" id="SSF53335">
    <property type="entry name" value="S-adenosyl-L-methionine-dependent methyltransferases"/>
    <property type="match status" value="1"/>
</dbReference>
<evidence type="ECO:0000255" key="1">
    <source>
        <dbReference type="HAMAP-Rule" id="MF_00074"/>
    </source>
</evidence>